<feature type="chain" id="PRO_0000099668" description="Uncharacterized 11.8 kDa protein">
    <location>
        <begin position="1"/>
        <end position="107"/>
    </location>
</feature>
<organism>
    <name type="scientific">Vaccinia virus (strain Western Reserve)</name>
    <name type="common">VACV</name>
    <name type="synonym">Vaccinia virus (strain WR)</name>
    <dbReference type="NCBI Taxonomy" id="10254"/>
    <lineage>
        <taxon>Viruses</taxon>
        <taxon>Varidnaviria</taxon>
        <taxon>Bamfordvirae</taxon>
        <taxon>Nucleocytoviricota</taxon>
        <taxon>Pokkesviricetes</taxon>
        <taxon>Chitovirales</taxon>
        <taxon>Poxviridae</taxon>
        <taxon>Chordopoxvirinae</taxon>
        <taxon>Orthopoxvirus</taxon>
        <taxon>Vaccinia virus</taxon>
    </lineage>
</organism>
<proteinExistence type="predicted"/>
<dbReference type="EMBL" id="AY243312">
    <property type="status" value="NOT_ANNOTATED_CDS"/>
    <property type="molecule type" value="Genomic_DNA"/>
</dbReference>
<dbReference type="PIR" id="B42529">
    <property type="entry name" value="B42529"/>
</dbReference>
<dbReference type="Proteomes" id="UP000000344">
    <property type="component" value="Genome"/>
</dbReference>
<sequence length="107" mass="11813">MVIYCSNSLGAYCKLVINKVAVLLTYFCFVALTNAQFFVSDILVHGKIPPNHLIIQYPSVSRSPRLDTTYPLCESIGVNSRVPLSILFGFLINGTCSPLDMNLETNP</sequence>
<reference key="1">
    <citation type="journal article" date="1991" name="J. Gen. Virol.">
        <title>Nucleotide sequence of 42 kbp of vaccinia virus strain WR from near the right inverted terminal repeat.</title>
        <authorList>
            <person name="Smith G.L."/>
            <person name="Chan Y.S."/>
            <person name="Howard S.T."/>
        </authorList>
    </citation>
    <scope>NUCLEOTIDE SEQUENCE [GENOMIC DNA]</scope>
</reference>
<organismHost>
    <name type="scientific">Bos taurus</name>
    <name type="common">Bovine</name>
    <dbReference type="NCBI Taxonomy" id="9913"/>
</organismHost>
<keyword id="KW-1185">Reference proteome</keyword>
<protein>
    <recommendedName>
        <fullName>Uncharacterized 11.8 kDa protein</fullName>
    </recommendedName>
</protein>
<accession>P68472</accession>
<accession>P20541</accession>
<name>YVBA_VACCW</name>
<gene>
    <name type="ORF">B ORF A</name>
</gene>